<keyword id="KW-0028">Amino-acid biosynthesis</keyword>
<keyword id="KW-0057">Aromatic amino acid biosynthesis</keyword>
<keyword id="KW-0456">Lyase</keyword>
<keyword id="KW-0663">Pyridoxal phosphate</keyword>
<keyword id="KW-1185">Reference proteome</keyword>
<keyword id="KW-0822">Tryptophan biosynthesis</keyword>
<reference key="1">
    <citation type="journal article" date="2003" name="Proc. Natl. Acad. Sci. U.S.A.">
        <title>The complete genome sequence of the Arabidopsis and tomato pathogen Pseudomonas syringae pv. tomato DC3000.</title>
        <authorList>
            <person name="Buell C.R."/>
            <person name="Joardar V."/>
            <person name="Lindeberg M."/>
            <person name="Selengut J."/>
            <person name="Paulsen I.T."/>
            <person name="Gwinn M.L."/>
            <person name="Dodson R.J."/>
            <person name="DeBoy R.T."/>
            <person name="Durkin A.S."/>
            <person name="Kolonay J.F."/>
            <person name="Madupu R."/>
            <person name="Daugherty S.C."/>
            <person name="Brinkac L.M."/>
            <person name="Beanan M.J."/>
            <person name="Haft D.H."/>
            <person name="Nelson W.C."/>
            <person name="Davidsen T.M."/>
            <person name="Zafar N."/>
            <person name="Zhou L."/>
            <person name="Liu J."/>
            <person name="Yuan Q."/>
            <person name="Khouri H.M."/>
            <person name="Fedorova N.B."/>
            <person name="Tran B."/>
            <person name="Russell D."/>
            <person name="Berry K.J."/>
            <person name="Utterback T.R."/>
            <person name="Van Aken S.E."/>
            <person name="Feldblyum T.V."/>
            <person name="D'Ascenzo M."/>
            <person name="Deng W.-L."/>
            <person name="Ramos A.R."/>
            <person name="Alfano J.R."/>
            <person name="Cartinhour S."/>
            <person name="Chatterjee A.K."/>
            <person name="Delaney T.P."/>
            <person name="Lazarowitz S.G."/>
            <person name="Martin G.B."/>
            <person name="Schneider D.J."/>
            <person name="Tang X."/>
            <person name="Bender C.L."/>
            <person name="White O."/>
            <person name="Fraser C.M."/>
            <person name="Collmer A."/>
        </authorList>
    </citation>
    <scope>NUCLEOTIDE SEQUENCE [LARGE SCALE GENOMIC DNA]</scope>
    <source>
        <strain>ATCC BAA-871 / DC3000</strain>
    </source>
</reference>
<sequence length="409" mass="44547">MTQTNFRSGPDANGLFGSFGGRYVAETLMPLVLDLNREYEAAKADPEFIKEMAYFQRDYIGRPNPLYFAERLTEFCGGAKIYFKREELNHTGAHKINNCIGQVLLAKRMGKKRLIAETGAGMHGVATATVAARFGLPCVIYMGATDIERQQANVFRMKLLGAEIVPVTSGTGTLKDAMNEALRDWVTNVDDTFYLIGTVAGPHPYPAMVRDFQSVIGKETKEQMQEKEGRLPDSLIACVGGGSNAMGLFHPFLDDASVEIIGVEAGGHGVDTDKHAASLNGGVPGVLHGNRTYLLQDNDGQITDAHSISAGLDYPGIGPEHAYLHEVKRVEYVSITDEEALDAFHQCCLLEGIIPALETAHALAEAMKRATNLRDDHLMVVCLSGRGDKDMQTVMNHMAAADNTQEKLV</sequence>
<comment type="function">
    <text evidence="1">The beta subunit is responsible for the synthesis of L-tryptophan from indole and L-serine.</text>
</comment>
<comment type="catalytic activity">
    <reaction evidence="1">
        <text>(1S,2R)-1-C-(indol-3-yl)glycerol 3-phosphate + L-serine = D-glyceraldehyde 3-phosphate + L-tryptophan + H2O</text>
        <dbReference type="Rhea" id="RHEA:10532"/>
        <dbReference type="ChEBI" id="CHEBI:15377"/>
        <dbReference type="ChEBI" id="CHEBI:33384"/>
        <dbReference type="ChEBI" id="CHEBI:57912"/>
        <dbReference type="ChEBI" id="CHEBI:58866"/>
        <dbReference type="ChEBI" id="CHEBI:59776"/>
        <dbReference type="EC" id="4.2.1.20"/>
    </reaction>
</comment>
<comment type="cofactor">
    <cofactor evidence="1">
        <name>pyridoxal 5'-phosphate</name>
        <dbReference type="ChEBI" id="CHEBI:597326"/>
    </cofactor>
</comment>
<comment type="pathway">
    <text evidence="1">Amino-acid biosynthesis; L-tryptophan biosynthesis; L-tryptophan from chorismate: step 5/5.</text>
</comment>
<comment type="subunit">
    <text evidence="1">Tetramer of two alpha and two beta chains.</text>
</comment>
<comment type="similarity">
    <text evidence="1">Belongs to the TrpB family.</text>
</comment>
<protein>
    <recommendedName>
        <fullName evidence="1">Tryptophan synthase beta chain</fullName>
        <ecNumber evidence="1">4.2.1.20</ecNumber>
    </recommendedName>
</protein>
<organism>
    <name type="scientific">Pseudomonas syringae pv. tomato (strain ATCC BAA-871 / DC3000)</name>
    <dbReference type="NCBI Taxonomy" id="223283"/>
    <lineage>
        <taxon>Bacteria</taxon>
        <taxon>Pseudomonadati</taxon>
        <taxon>Pseudomonadota</taxon>
        <taxon>Gammaproteobacteria</taxon>
        <taxon>Pseudomonadales</taxon>
        <taxon>Pseudomonadaceae</taxon>
        <taxon>Pseudomonas</taxon>
    </lineage>
</organism>
<proteinExistence type="inferred from homology"/>
<name>TRPB_PSESM</name>
<feature type="chain" id="PRO_0000098985" description="Tryptophan synthase beta chain">
    <location>
        <begin position="1"/>
        <end position="409"/>
    </location>
</feature>
<feature type="modified residue" description="N6-(pyridoxal phosphate)lysine" evidence="1">
    <location>
        <position position="95"/>
    </location>
</feature>
<accession>Q88B61</accession>
<evidence type="ECO:0000255" key="1">
    <source>
        <dbReference type="HAMAP-Rule" id="MF_00133"/>
    </source>
</evidence>
<gene>
    <name evidence="1" type="primary">trpB</name>
    <name type="ordered locus">PSPTO_0158</name>
</gene>
<dbReference type="EC" id="4.2.1.20" evidence="1"/>
<dbReference type="EMBL" id="AE016853">
    <property type="protein sequence ID" value="AAO53712.1"/>
    <property type="molecule type" value="Genomic_DNA"/>
</dbReference>
<dbReference type="RefSeq" id="NP_790017.1">
    <property type="nucleotide sequence ID" value="NC_004578.1"/>
</dbReference>
<dbReference type="RefSeq" id="WP_005768143.1">
    <property type="nucleotide sequence ID" value="NC_004578.1"/>
</dbReference>
<dbReference type="SMR" id="Q88B61"/>
<dbReference type="STRING" id="223283.PSPTO_0158"/>
<dbReference type="GeneID" id="1181766"/>
<dbReference type="KEGG" id="pst:PSPTO_0158"/>
<dbReference type="PATRIC" id="fig|223283.9.peg.164"/>
<dbReference type="eggNOG" id="COG0133">
    <property type="taxonomic scope" value="Bacteria"/>
</dbReference>
<dbReference type="HOGENOM" id="CLU_016734_3_1_6"/>
<dbReference type="OrthoDB" id="9766131at2"/>
<dbReference type="PhylomeDB" id="Q88B61"/>
<dbReference type="UniPathway" id="UPA00035">
    <property type="reaction ID" value="UER00044"/>
</dbReference>
<dbReference type="Proteomes" id="UP000002515">
    <property type="component" value="Chromosome"/>
</dbReference>
<dbReference type="GO" id="GO:0005737">
    <property type="term" value="C:cytoplasm"/>
    <property type="evidence" value="ECO:0007669"/>
    <property type="project" value="TreeGrafter"/>
</dbReference>
<dbReference type="GO" id="GO:0004834">
    <property type="term" value="F:tryptophan synthase activity"/>
    <property type="evidence" value="ECO:0007669"/>
    <property type="project" value="UniProtKB-UniRule"/>
</dbReference>
<dbReference type="CDD" id="cd06446">
    <property type="entry name" value="Trp-synth_B"/>
    <property type="match status" value="1"/>
</dbReference>
<dbReference type="FunFam" id="3.40.50.1100:FF:000001">
    <property type="entry name" value="Tryptophan synthase beta chain"/>
    <property type="match status" value="1"/>
</dbReference>
<dbReference type="FunFam" id="3.40.50.1100:FF:000004">
    <property type="entry name" value="Tryptophan synthase beta chain"/>
    <property type="match status" value="1"/>
</dbReference>
<dbReference type="Gene3D" id="3.40.50.1100">
    <property type="match status" value="2"/>
</dbReference>
<dbReference type="HAMAP" id="MF_00133">
    <property type="entry name" value="Trp_synth_beta"/>
    <property type="match status" value="1"/>
</dbReference>
<dbReference type="InterPro" id="IPR006653">
    <property type="entry name" value="Trp_synth_b_CS"/>
</dbReference>
<dbReference type="InterPro" id="IPR006654">
    <property type="entry name" value="Trp_synth_beta"/>
</dbReference>
<dbReference type="InterPro" id="IPR023026">
    <property type="entry name" value="Trp_synth_beta/beta-like"/>
</dbReference>
<dbReference type="InterPro" id="IPR001926">
    <property type="entry name" value="TrpB-like_PALP"/>
</dbReference>
<dbReference type="InterPro" id="IPR036052">
    <property type="entry name" value="TrpB-like_PALP_sf"/>
</dbReference>
<dbReference type="NCBIfam" id="TIGR00263">
    <property type="entry name" value="trpB"/>
    <property type="match status" value="1"/>
</dbReference>
<dbReference type="PANTHER" id="PTHR48077:SF3">
    <property type="entry name" value="TRYPTOPHAN SYNTHASE"/>
    <property type="match status" value="1"/>
</dbReference>
<dbReference type="PANTHER" id="PTHR48077">
    <property type="entry name" value="TRYPTOPHAN SYNTHASE-RELATED"/>
    <property type="match status" value="1"/>
</dbReference>
<dbReference type="Pfam" id="PF00291">
    <property type="entry name" value="PALP"/>
    <property type="match status" value="1"/>
</dbReference>
<dbReference type="PIRSF" id="PIRSF001413">
    <property type="entry name" value="Trp_syn_beta"/>
    <property type="match status" value="1"/>
</dbReference>
<dbReference type="SUPFAM" id="SSF53686">
    <property type="entry name" value="Tryptophan synthase beta subunit-like PLP-dependent enzymes"/>
    <property type="match status" value="1"/>
</dbReference>
<dbReference type="PROSITE" id="PS00168">
    <property type="entry name" value="TRP_SYNTHASE_BETA"/>
    <property type="match status" value="1"/>
</dbReference>